<accession>Q73FC1</accession>
<sequence>MYTLIIPAAGQGKRMGAGKNKLFLLINEVPIIVHTLRAFEKDKACKNIIMAINEEERPYFEELMQKYPVKKPVQFIQGGAERQDSVYNAIQHTSDVEYVLVHDGARPFVTNKVIQDVLTAAEKYGASICAVPVKDTVKKVEQGVVVETVERSQLKAVQTPQGFSVSLLLEAHRSAKQSCFLGTDDASLVERIGKQVGVVEGSYYNIKVTTPEDLLIAESFLHVQKK</sequence>
<protein>
    <recommendedName>
        <fullName evidence="1">2-C-methyl-D-erythritol 4-phosphate cytidylyltransferase</fullName>
        <ecNumber evidence="1">2.7.7.60</ecNumber>
    </recommendedName>
    <alternativeName>
        <fullName evidence="1">4-diphosphocytidyl-2C-methyl-D-erythritol synthase</fullName>
    </alternativeName>
    <alternativeName>
        <fullName evidence="1">MEP cytidylyltransferase</fullName>
        <shortName evidence="1">MCT</shortName>
    </alternativeName>
</protein>
<feature type="chain" id="PRO_0000075547" description="2-C-methyl-D-erythritol 4-phosphate cytidylyltransferase">
    <location>
        <begin position="1"/>
        <end position="226"/>
    </location>
</feature>
<feature type="site" description="Transition state stabilizer" evidence="1">
    <location>
        <position position="14"/>
    </location>
</feature>
<feature type="site" description="Transition state stabilizer" evidence="1">
    <location>
        <position position="21"/>
    </location>
</feature>
<feature type="site" description="Positions MEP for the nucleophilic attack" evidence="1">
    <location>
        <position position="151"/>
    </location>
</feature>
<feature type="site" description="Positions MEP for the nucleophilic attack" evidence="1">
    <location>
        <position position="207"/>
    </location>
</feature>
<proteinExistence type="inferred from homology"/>
<name>ISPD_BACC1</name>
<dbReference type="EC" id="2.7.7.60" evidence="1"/>
<dbReference type="EMBL" id="AE017194">
    <property type="protein sequence ID" value="AAS39021.1"/>
    <property type="molecule type" value="Genomic_DNA"/>
</dbReference>
<dbReference type="SMR" id="Q73FC1"/>
<dbReference type="KEGG" id="bca:BCE_0085"/>
<dbReference type="HOGENOM" id="CLU_061281_2_2_9"/>
<dbReference type="UniPathway" id="UPA00056">
    <property type="reaction ID" value="UER00093"/>
</dbReference>
<dbReference type="Proteomes" id="UP000002527">
    <property type="component" value="Chromosome"/>
</dbReference>
<dbReference type="GO" id="GO:0050518">
    <property type="term" value="F:2-C-methyl-D-erythritol 4-phosphate cytidylyltransferase activity"/>
    <property type="evidence" value="ECO:0007669"/>
    <property type="project" value="UniProtKB-UniRule"/>
</dbReference>
<dbReference type="GO" id="GO:0019288">
    <property type="term" value="P:isopentenyl diphosphate biosynthetic process, methylerythritol 4-phosphate pathway"/>
    <property type="evidence" value="ECO:0007669"/>
    <property type="project" value="UniProtKB-UniRule"/>
</dbReference>
<dbReference type="CDD" id="cd02516">
    <property type="entry name" value="CDP-ME_synthetase"/>
    <property type="match status" value="1"/>
</dbReference>
<dbReference type="FunFam" id="3.90.550.10:FF:000003">
    <property type="entry name" value="2-C-methyl-D-erythritol 4-phosphate cytidylyltransferase"/>
    <property type="match status" value="1"/>
</dbReference>
<dbReference type="Gene3D" id="3.90.550.10">
    <property type="entry name" value="Spore Coat Polysaccharide Biosynthesis Protein SpsA, Chain A"/>
    <property type="match status" value="1"/>
</dbReference>
<dbReference type="HAMAP" id="MF_00108">
    <property type="entry name" value="IspD"/>
    <property type="match status" value="1"/>
</dbReference>
<dbReference type="InterPro" id="IPR001228">
    <property type="entry name" value="IspD"/>
</dbReference>
<dbReference type="InterPro" id="IPR034683">
    <property type="entry name" value="IspD/TarI"/>
</dbReference>
<dbReference type="InterPro" id="IPR050088">
    <property type="entry name" value="IspD/TarI_cytidylyltransf_bact"/>
</dbReference>
<dbReference type="InterPro" id="IPR018294">
    <property type="entry name" value="ISPD_synthase_CS"/>
</dbReference>
<dbReference type="InterPro" id="IPR029044">
    <property type="entry name" value="Nucleotide-diphossugar_trans"/>
</dbReference>
<dbReference type="NCBIfam" id="TIGR00453">
    <property type="entry name" value="ispD"/>
    <property type="match status" value="1"/>
</dbReference>
<dbReference type="PANTHER" id="PTHR32125">
    <property type="entry name" value="2-C-METHYL-D-ERYTHRITOL 4-PHOSPHATE CYTIDYLYLTRANSFERASE, CHLOROPLASTIC"/>
    <property type="match status" value="1"/>
</dbReference>
<dbReference type="PANTHER" id="PTHR32125:SF4">
    <property type="entry name" value="2-C-METHYL-D-ERYTHRITOL 4-PHOSPHATE CYTIDYLYLTRANSFERASE, CHLOROPLASTIC"/>
    <property type="match status" value="1"/>
</dbReference>
<dbReference type="Pfam" id="PF01128">
    <property type="entry name" value="IspD"/>
    <property type="match status" value="1"/>
</dbReference>
<dbReference type="SUPFAM" id="SSF53448">
    <property type="entry name" value="Nucleotide-diphospho-sugar transferases"/>
    <property type="match status" value="1"/>
</dbReference>
<dbReference type="PROSITE" id="PS01295">
    <property type="entry name" value="ISPD"/>
    <property type="match status" value="1"/>
</dbReference>
<reference key="1">
    <citation type="journal article" date="2004" name="Nucleic Acids Res.">
        <title>The genome sequence of Bacillus cereus ATCC 10987 reveals metabolic adaptations and a large plasmid related to Bacillus anthracis pXO1.</title>
        <authorList>
            <person name="Rasko D.A."/>
            <person name="Ravel J."/>
            <person name="Oekstad O.A."/>
            <person name="Helgason E."/>
            <person name="Cer R.Z."/>
            <person name="Jiang L."/>
            <person name="Shores K.A."/>
            <person name="Fouts D.E."/>
            <person name="Tourasse N.J."/>
            <person name="Angiuoli S.V."/>
            <person name="Kolonay J.F."/>
            <person name="Nelson W.C."/>
            <person name="Kolstoe A.-B."/>
            <person name="Fraser C.M."/>
            <person name="Read T.D."/>
        </authorList>
    </citation>
    <scope>NUCLEOTIDE SEQUENCE [LARGE SCALE GENOMIC DNA]</scope>
    <source>
        <strain>ATCC 10987 / NRS 248</strain>
    </source>
</reference>
<gene>
    <name evidence="1" type="primary">ispD</name>
    <name type="ordered locus">BCE_0085</name>
</gene>
<organism>
    <name type="scientific">Bacillus cereus (strain ATCC 10987 / NRS 248)</name>
    <dbReference type="NCBI Taxonomy" id="222523"/>
    <lineage>
        <taxon>Bacteria</taxon>
        <taxon>Bacillati</taxon>
        <taxon>Bacillota</taxon>
        <taxon>Bacilli</taxon>
        <taxon>Bacillales</taxon>
        <taxon>Bacillaceae</taxon>
        <taxon>Bacillus</taxon>
        <taxon>Bacillus cereus group</taxon>
    </lineage>
</organism>
<keyword id="KW-0414">Isoprene biosynthesis</keyword>
<keyword id="KW-0548">Nucleotidyltransferase</keyword>
<keyword id="KW-0808">Transferase</keyword>
<comment type="function">
    <text evidence="1">Catalyzes the formation of 4-diphosphocytidyl-2-C-methyl-D-erythritol from CTP and 2-C-methyl-D-erythritol 4-phosphate (MEP).</text>
</comment>
<comment type="catalytic activity">
    <reaction evidence="1">
        <text>2-C-methyl-D-erythritol 4-phosphate + CTP + H(+) = 4-CDP-2-C-methyl-D-erythritol + diphosphate</text>
        <dbReference type="Rhea" id="RHEA:13429"/>
        <dbReference type="ChEBI" id="CHEBI:15378"/>
        <dbReference type="ChEBI" id="CHEBI:33019"/>
        <dbReference type="ChEBI" id="CHEBI:37563"/>
        <dbReference type="ChEBI" id="CHEBI:57823"/>
        <dbReference type="ChEBI" id="CHEBI:58262"/>
        <dbReference type="EC" id="2.7.7.60"/>
    </reaction>
</comment>
<comment type="pathway">
    <text evidence="1">Isoprenoid biosynthesis; isopentenyl diphosphate biosynthesis via DXP pathway; isopentenyl diphosphate from 1-deoxy-D-xylulose 5-phosphate: step 2/6.</text>
</comment>
<comment type="similarity">
    <text evidence="1">Belongs to the IspD/TarI cytidylyltransferase family. IspD subfamily.</text>
</comment>
<evidence type="ECO:0000255" key="1">
    <source>
        <dbReference type="HAMAP-Rule" id="MF_00108"/>
    </source>
</evidence>